<dbReference type="EMBL" id="CP000688">
    <property type="protein sequence ID" value="ABQ16905.1"/>
    <property type="molecule type" value="Genomic_DNA"/>
</dbReference>
<dbReference type="SMR" id="A5FSB6"/>
<dbReference type="KEGG" id="deb:DehaBAV1_0319"/>
<dbReference type="PATRIC" id="fig|216389.18.peg.358"/>
<dbReference type="HOGENOM" id="CLU_107907_0_3_0"/>
<dbReference type="GO" id="GO:0005737">
    <property type="term" value="C:cytoplasm"/>
    <property type="evidence" value="ECO:0007669"/>
    <property type="project" value="UniProtKB-UniRule"/>
</dbReference>
<dbReference type="GO" id="GO:0009295">
    <property type="term" value="C:nucleoid"/>
    <property type="evidence" value="ECO:0007669"/>
    <property type="project" value="UniProtKB-SubCell"/>
</dbReference>
<dbReference type="GO" id="GO:0003700">
    <property type="term" value="F:DNA-binding transcription factor activity"/>
    <property type="evidence" value="ECO:0007669"/>
    <property type="project" value="UniProtKB-UniRule"/>
</dbReference>
<dbReference type="GO" id="GO:0000976">
    <property type="term" value="F:transcription cis-regulatory region binding"/>
    <property type="evidence" value="ECO:0007669"/>
    <property type="project" value="TreeGrafter"/>
</dbReference>
<dbReference type="GO" id="GO:2000143">
    <property type="term" value="P:negative regulation of DNA-templated transcription initiation"/>
    <property type="evidence" value="ECO:0007669"/>
    <property type="project" value="TreeGrafter"/>
</dbReference>
<dbReference type="CDD" id="cd16321">
    <property type="entry name" value="MraZ_C"/>
    <property type="match status" value="1"/>
</dbReference>
<dbReference type="CDD" id="cd16320">
    <property type="entry name" value="MraZ_N"/>
    <property type="match status" value="1"/>
</dbReference>
<dbReference type="Gene3D" id="3.40.1550.20">
    <property type="entry name" value="Transcriptional regulator MraZ domain"/>
    <property type="match status" value="1"/>
</dbReference>
<dbReference type="HAMAP" id="MF_01008">
    <property type="entry name" value="MraZ"/>
    <property type="match status" value="1"/>
</dbReference>
<dbReference type="InterPro" id="IPR003444">
    <property type="entry name" value="MraZ"/>
</dbReference>
<dbReference type="InterPro" id="IPR035644">
    <property type="entry name" value="MraZ_C"/>
</dbReference>
<dbReference type="InterPro" id="IPR020603">
    <property type="entry name" value="MraZ_dom"/>
</dbReference>
<dbReference type="InterPro" id="IPR035642">
    <property type="entry name" value="MraZ_N"/>
</dbReference>
<dbReference type="InterPro" id="IPR038619">
    <property type="entry name" value="MraZ_sf"/>
</dbReference>
<dbReference type="InterPro" id="IPR007159">
    <property type="entry name" value="SpoVT-AbrB_dom"/>
</dbReference>
<dbReference type="InterPro" id="IPR037914">
    <property type="entry name" value="SpoVT-AbrB_sf"/>
</dbReference>
<dbReference type="NCBIfam" id="TIGR00242">
    <property type="entry name" value="division/cell wall cluster transcriptional repressor MraZ"/>
    <property type="match status" value="1"/>
</dbReference>
<dbReference type="PANTHER" id="PTHR34701">
    <property type="entry name" value="TRANSCRIPTIONAL REGULATOR MRAZ"/>
    <property type="match status" value="1"/>
</dbReference>
<dbReference type="PANTHER" id="PTHR34701:SF1">
    <property type="entry name" value="TRANSCRIPTIONAL REGULATOR MRAZ"/>
    <property type="match status" value="1"/>
</dbReference>
<dbReference type="Pfam" id="PF02381">
    <property type="entry name" value="MraZ"/>
    <property type="match status" value="2"/>
</dbReference>
<dbReference type="SUPFAM" id="SSF89447">
    <property type="entry name" value="AbrB/MazE/MraZ-like"/>
    <property type="match status" value="1"/>
</dbReference>
<dbReference type="PROSITE" id="PS51740">
    <property type="entry name" value="SPOVT_ABRB"/>
    <property type="match status" value="2"/>
</dbReference>
<evidence type="ECO:0000255" key="1">
    <source>
        <dbReference type="HAMAP-Rule" id="MF_01008"/>
    </source>
</evidence>
<evidence type="ECO:0000255" key="2">
    <source>
        <dbReference type="PROSITE-ProRule" id="PRU01076"/>
    </source>
</evidence>
<protein>
    <recommendedName>
        <fullName>Transcriptional regulator MraZ</fullName>
    </recommendedName>
</protein>
<feature type="chain" id="PRO_1000084003" description="Transcriptional regulator MraZ">
    <location>
        <begin position="1"/>
        <end position="142"/>
    </location>
</feature>
<feature type="domain" description="SpoVT-AbrB 1" evidence="2">
    <location>
        <begin position="5"/>
        <end position="48"/>
    </location>
</feature>
<feature type="domain" description="SpoVT-AbrB 2" evidence="2">
    <location>
        <begin position="77"/>
        <end position="120"/>
    </location>
</feature>
<comment type="subunit">
    <text evidence="1">Forms oligomers.</text>
</comment>
<comment type="subcellular location">
    <subcellularLocation>
        <location evidence="1">Cytoplasm</location>
        <location evidence="1">Nucleoid</location>
    </subcellularLocation>
</comment>
<comment type="similarity">
    <text evidence="1">Belongs to the MraZ family.</text>
</comment>
<accession>A5FSB6</accession>
<keyword id="KW-0963">Cytoplasm</keyword>
<keyword id="KW-0238">DNA-binding</keyword>
<keyword id="KW-0677">Repeat</keyword>
<keyword id="KW-0804">Transcription</keyword>
<keyword id="KW-0805">Transcription regulation</keyword>
<reference key="1">
    <citation type="submission" date="2007-05" db="EMBL/GenBank/DDBJ databases">
        <title>Complete sequence of Dehalococcoides sp. BAV1.</title>
        <authorList>
            <consortium name="US DOE Joint Genome Institute"/>
            <person name="Copeland A."/>
            <person name="Lucas S."/>
            <person name="Lapidus A."/>
            <person name="Barry K."/>
            <person name="Detter J.C."/>
            <person name="Glavina del Rio T."/>
            <person name="Hammon N."/>
            <person name="Israni S."/>
            <person name="Pitluck S."/>
            <person name="Lowry S."/>
            <person name="Clum A."/>
            <person name="Schmutz J."/>
            <person name="Larimer F."/>
            <person name="Land M."/>
            <person name="Hauser L."/>
            <person name="Kyrpides N."/>
            <person name="Kim E."/>
            <person name="Ritalahti K.M."/>
            <person name="Loeffler F."/>
            <person name="Richardson P."/>
        </authorList>
    </citation>
    <scope>NUCLEOTIDE SEQUENCE [LARGE SCALE GENOMIC DNA]</scope>
    <source>
        <strain>ATCC BAA-2100 / JCM 16839 / KCTC 5957 / BAV1</strain>
    </source>
</reference>
<gene>
    <name evidence="1" type="primary">mraZ</name>
    <name type="ordered locus">DehaBAV1_0319</name>
</gene>
<organism>
    <name type="scientific">Dehalococcoides mccartyi (strain ATCC BAA-2100 / JCM 16839 / KCTC 5957 / BAV1)</name>
    <dbReference type="NCBI Taxonomy" id="216389"/>
    <lineage>
        <taxon>Bacteria</taxon>
        <taxon>Bacillati</taxon>
        <taxon>Chloroflexota</taxon>
        <taxon>Dehalococcoidia</taxon>
        <taxon>Dehalococcoidales</taxon>
        <taxon>Dehalococcoidaceae</taxon>
        <taxon>Dehalococcoides</taxon>
    </lineage>
</organism>
<sequence>MFFGEFEYKLDEKGRFPLPPAIRPSLKDGLILAPGTGEKCIYAYPLCEWKKLAESLKSTTVAPSKMRRLNRALFALAFDVNLDAQGRLTLPAPLKTYAGVNIEVIVAGVNNYLEIWDKETWESEKKASQEQAWQIIETLEEH</sequence>
<proteinExistence type="inferred from homology"/>
<name>MRAZ_DEHMB</name>